<evidence type="ECO:0000305" key="1"/>
<dbReference type="EMBL" id="Z23096">
    <property type="protein sequence ID" value="CAA80644.1"/>
    <property type="molecule type" value="Genomic_DNA"/>
</dbReference>
<dbReference type="EMBL" id="U00096">
    <property type="protein sequence ID" value="ABD18659.1"/>
    <property type="molecule type" value="Genomic_DNA"/>
</dbReference>
<dbReference type="EMBL" id="AP009048">
    <property type="protein sequence ID" value="BAA14954.1"/>
    <property type="molecule type" value="Genomic_DNA"/>
</dbReference>
<dbReference type="EMBL" id="M96749">
    <property type="protein sequence ID" value="AAA32251.1"/>
    <property type="status" value="ALT_INIT"/>
    <property type="molecule type" value="Genomic_DNA"/>
</dbReference>
<dbReference type="EMBL" id="M24905">
    <property type="status" value="NOT_ANNOTATED_CDS"/>
    <property type="molecule type" value="Unassigned_DNA"/>
</dbReference>
<dbReference type="PIR" id="T09177">
    <property type="entry name" value="T09177"/>
</dbReference>
<dbReference type="RefSeq" id="WP_001352098.1">
    <property type="nucleotide sequence ID" value="NZ_SSUV01000042.1"/>
</dbReference>
<dbReference type="RefSeq" id="YP_588451.1">
    <property type="nucleotide sequence ID" value="NC_000913.3"/>
</dbReference>
<dbReference type="BioGRID" id="4260770">
    <property type="interactions" value="187"/>
</dbReference>
<dbReference type="FunCoup" id="P38394">
    <property type="interactions" value="108"/>
</dbReference>
<dbReference type="IntAct" id="P38394">
    <property type="interactions" value="5"/>
</dbReference>
<dbReference type="STRING" id="511145.b4526"/>
<dbReference type="PaxDb" id="511145-b4526"/>
<dbReference type="EnsemblBacteria" id="ABD18659">
    <property type="protein sequence ID" value="ABD18659"/>
    <property type="gene ID" value="b4526"/>
</dbReference>
<dbReference type="GeneID" id="948959"/>
<dbReference type="KEGG" id="ecj:JW1346"/>
<dbReference type="KEGG" id="eco:b4526"/>
<dbReference type="PATRIC" id="fig|511145.12.peg.1411"/>
<dbReference type="EchoBASE" id="EB2076"/>
<dbReference type="eggNOG" id="ENOG502ZS9G">
    <property type="taxonomic scope" value="Bacteria"/>
</dbReference>
<dbReference type="HOGENOM" id="CLU_186153_1_0_6"/>
<dbReference type="InParanoid" id="P38394"/>
<dbReference type="OrthoDB" id="6570146at2"/>
<dbReference type="PhylomeDB" id="P38394"/>
<dbReference type="BioCyc" id="EcoCyc:MONOMER0-1001"/>
<dbReference type="PRO" id="PR:P38394"/>
<dbReference type="Proteomes" id="UP000000625">
    <property type="component" value="Chromosome"/>
</dbReference>
<dbReference type="GO" id="GO:0008270">
    <property type="term" value="F:zinc ion binding"/>
    <property type="evidence" value="ECO:0000314"/>
    <property type="project" value="EcoCyc"/>
</dbReference>
<dbReference type="Gene3D" id="1.25.40.820">
    <property type="match status" value="1"/>
</dbReference>
<dbReference type="InterPro" id="IPR038534">
    <property type="entry name" value="Rtr1/RPAP2_sf"/>
</dbReference>
<dbReference type="InterPro" id="IPR047842">
    <property type="entry name" value="YdaE-like"/>
</dbReference>
<dbReference type="NCBIfam" id="NF041288">
    <property type="entry name" value="YdaE_coli"/>
    <property type="match status" value="1"/>
</dbReference>
<organism>
    <name type="scientific">Escherichia coli (strain K12)</name>
    <dbReference type="NCBI Taxonomy" id="83333"/>
    <lineage>
        <taxon>Bacteria</taxon>
        <taxon>Pseudomonadati</taxon>
        <taxon>Pseudomonadota</taxon>
        <taxon>Gammaproteobacteria</taxon>
        <taxon>Enterobacterales</taxon>
        <taxon>Enterobacteriaceae</taxon>
        <taxon>Escherichia</taxon>
    </lineage>
</organism>
<feature type="chain" id="PRO_0000168902" description="Uncharacterized protein YdaE">
    <location>
        <begin position="1"/>
        <end position="56"/>
    </location>
</feature>
<comment type="sequence caution" evidence="1">
    <conflict type="erroneous initiation">
        <sequence resource="EMBL-CDS" id="AAA32251"/>
    </conflict>
</comment>
<proteinExistence type="predicted"/>
<protein>
    <recommendedName>
        <fullName>Uncharacterized protein YdaE</fullName>
    </recommendedName>
</protein>
<accession>P38394</accession>
<accession>Q2EER7</accession>
<keyword id="KW-1185">Reference proteome</keyword>
<gene>
    <name type="primary">ydaE</name>
    <name type="ordered locus">b4526</name>
    <name type="ordered locus">JW1346</name>
</gene>
<sequence>MTKKIKCAYHLCKKDVEESKAIERMLHFMHGILSKDEPRKYCSEACAEKDQMAHEL</sequence>
<name>YDAE_ECOLI</name>
<reference key="1">
    <citation type="unpublished observations" date="1994-08">
        <authorList>
            <person name="Clark A.J."/>
            <person name="Samra H."/>
        </authorList>
    </citation>
    <scope>NUCLEOTIDE SEQUENCE [GENOMIC DNA]</scope>
    <source>
        <strain>K12</strain>
    </source>
</reference>
<reference key="2">
    <citation type="journal article" date="1996" name="DNA Res.">
        <title>A 570-kb DNA sequence of the Escherichia coli K-12 genome corresponding to the 28.0-40.1 min region on the linkage map.</title>
        <authorList>
            <person name="Aiba H."/>
            <person name="Baba T."/>
            <person name="Fujita K."/>
            <person name="Hayashi K."/>
            <person name="Inada T."/>
            <person name="Isono K."/>
            <person name="Itoh T."/>
            <person name="Kasai H."/>
            <person name="Kashimoto K."/>
            <person name="Kimura S."/>
            <person name="Kitakawa M."/>
            <person name="Kitagawa M."/>
            <person name="Makino K."/>
            <person name="Miki T."/>
            <person name="Mizobuchi K."/>
            <person name="Mori H."/>
            <person name="Mori T."/>
            <person name="Motomura K."/>
            <person name="Nakade S."/>
            <person name="Nakamura Y."/>
            <person name="Nashimoto H."/>
            <person name="Nishio Y."/>
            <person name="Oshima T."/>
            <person name="Saito N."/>
            <person name="Sampei G."/>
            <person name="Seki Y."/>
            <person name="Sivasundaram S."/>
            <person name="Tagami H."/>
            <person name="Takeda J."/>
            <person name="Takemoto K."/>
            <person name="Takeuchi Y."/>
            <person name="Wada C."/>
            <person name="Yamamoto Y."/>
            <person name="Horiuchi T."/>
        </authorList>
    </citation>
    <scope>NUCLEOTIDE SEQUENCE [LARGE SCALE GENOMIC DNA]</scope>
    <source>
        <strain>K12 / W3110 / ATCC 27325 / DSM 5911</strain>
    </source>
</reference>
<reference key="3">
    <citation type="journal article" date="1997" name="Science">
        <title>The complete genome sequence of Escherichia coli K-12.</title>
        <authorList>
            <person name="Blattner F.R."/>
            <person name="Plunkett G. III"/>
            <person name="Bloch C.A."/>
            <person name="Perna N.T."/>
            <person name="Burland V."/>
            <person name="Riley M."/>
            <person name="Collado-Vides J."/>
            <person name="Glasner J.D."/>
            <person name="Rode C.K."/>
            <person name="Mayhew G.F."/>
            <person name="Gregor J."/>
            <person name="Davis N.W."/>
            <person name="Kirkpatrick H.A."/>
            <person name="Goeden M.A."/>
            <person name="Rose D.J."/>
            <person name="Mau B."/>
            <person name="Shao Y."/>
        </authorList>
    </citation>
    <scope>NUCLEOTIDE SEQUENCE [LARGE SCALE GENOMIC DNA]</scope>
    <source>
        <strain>K12 / MG1655 / ATCC 47076</strain>
    </source>
</reference>
<reference key="4">
    <citation type="journal article" date="2006" name="Mol. Syst. Biol.">
        <title>Highly accurate genome sequences of Escherichia coli K-12 strains MG1655 and W3110.</title>
        <authorList>
            <person name="Hayashi K."/>
            <person name="Morooka N."/>
            <person name="Yamamoto Y."/>
            <person name="Fujita K."/>
            <person name="Isono K."/>
            <person name="Choi S."/>
            <person name="Ohtsubo E."/>
            <person name="Baba T."/>
            <person name="Wanner B.L."/>
            <person name="Mori H."/>
            <person name="Horiuchi T."/>
        </authorList>
    </citation>
    <scope>NUCLEOTIDE SEQUENCE [LARGE SCALE GENOMIC DNA]</scope>
    <source>
        <strain>K12 / W3110 / ATCC 27325 / DSM 5911</strain>
    </source>
</reference>
<reference key="5">
    <citation type="journal article" date="1994" name="J. Bacteriol.">
        <title>Division inhibition gene dicF of Escherichia coli reveals a widespread group of prophage sequences in bacterial genomes.</title>
        <authorList>
            <person name="Faubladier M."/>
            <person name="Bouche J.-P."/>
        </authorList>
    </citation>
    <scope>NUCLEOTIDE SEQUENCE [GENOMIC DNA] OF 1-39</scope>
    <source>
        <strain>B</strain>
    </source>
</reference>
<reference key="6">
    <citation type="journal article" date="1989" name="J. Bacteriol.">
        <title>Suppression of a frameshift mutation in the recE gene of Escherichia coli K-12 occurs by gene fusion.</title>
        <authorList>
            <person name="Chu C.C."/>
            <person name="Templin A."/>
            <person name="Clark A.J."/>
        </authorList>
    </citation>
    <scope>NUCLEOTIDE SEQUENCE [GENOMIC DNA] OF 45-56</scope>
    <source>
        <strain>K12</strain>
    </source>
</reference>